<organism>
    <name type="scientific">Nitratidesulfovibrio vulgaris (strain DSM 19637 / Miyazaki F)</name>
    <name type="common">Desulfovibrio vulgaris</name>
    <dbReference type="NCBI Taxonomy" id="883"/>
    <lineage>
        <taxon>Bacteria</taxon>
        <taxon>Pseudomonadati</taxon>
        <taxon>Thermodesulfobacteriota</taxon>
        <taxon>Desulfovibrionia</taxon>
        <taxon>Desulfovibrionales</taxon>
        <taxon>Desulfovibrionaceae</taxon>
        <taxon>Nitratidesulfovibrio</taxon>
    </lineage>
</organism>
<keyword id="KW-0560">Oxidoreductase</keyword>
<sequence length="443" mass="48205">MPFIPHSPEEVREMLSVIGVQSIEDLFVDIPAEMRPRSFELPLGLSEMQVLAKMEEMAARNRTDVVSFLGGGFYSHHIPAAVDALVSRGEFYTAYTPYQPEASQGTLQAIFEYQTAVCRLLDMDCANASVYDGGSAIFEAMMMAVRATKRRKLVIDEAVSPIWRTMLASYTSNLSLDLVTVPQVDGRSDMAAMKAAVDTGCAAVVVQNPNFFGVVEDFTDLFAHAKSQKAASVISVYPVMQSVLKTPGEMGADIAVAEGQSLGQPLSFGGPYLGIMTCTKDMVRQMPGRIVGRTNDTEGRTGYVLTLQAREQHIRRAKATSNICSNQALCALRTLVHLCLLGPEGLIRTAELSMERARYAMERLTAIAGVRPLNTAPFGNEFAVRLPIPAFEAVDRLTARGYVPGFPVGRYYAGMDDVLLVACTEKNSFEQVGILAEMLGGIL</sequence>
<proteinExistence type="inferred from homology"/>
<feature type="chain" id="PRO_1000132478" description="Probable glycine dehydrogenase (decarboxylating) subunit 1">
    <location>
        <begin position="1"/>
        <end position="443"/>
    </location>
</feature>
<accession>B8DP96</accession>
<gene>
    <name evidence="1" type="primary">gcvPA</name>
    <name type="ordered locus">DvMF_0224</name>
</gene>
<reference key="1">
    <citation type="submission" date="2008-10" db="EMBL/GenBank/DDBJ databases">
        <title>Complete sequence of Desulfovibrio vulgaris str. 'Miyazaki F'.</title>
        <authorList>
            <person name="Lucas S."/>
            <person name="Copeland A."/>
            <person name="Lapidus A."/>
            <person name="Glavina del Rio T."/>
            <person name="Dalin E."/>
            <person name="Tice H."/>
            <person name="Bruce D."/>
            <person name="Goodwin L."/>
            <person name="Pitluck S."/>
            <person name="Sims D."/>
            <person name="Brettin T."/>
            <person name="Detter J.C."/>
            <person name="Han C."/>
            <person name="Larimer F."/>
            <person name="Land M."/>
            <person name="Hauser L."/>
            <person name="Kyrpides N."/>
            <person name="Mikhailova N."/>
            <person name="Hazen T.C."/>
            <person name="Richardson P."/>
        </authorList>
    </citation>
    <scope>NUCLEOTIDE SEQUENCE [LARGE SCALE GENOMIC DNA]</scope>
    <source>
        <strain>DSM 19637 / Miyazaki F</strain>
    </source>
</reference>
<comment type="function">
    <text evidence="1">The glycine cleavage system catalyzes the degradation of glycine. The P protein binds the alpha-amino group of glycine through its pyridoxal phosphate cofactor; CO(2) is released and the remaining methylamine moiety is then transferred to the lipoamide cofactor of the H protein.</text>
</comment>
<comment type="catalytic activity">
    <reaction evidence="1">
        <text>N(6)-[(R)-lipoyl]-L-lysyl-[glycine-cleavage complex H protein] + glycine + H(+) = N(6)-[(R)-S(8)-aminomethyldihydrolipoyl]-L-lysyl-[glycine-cleavage complex H protein] + CO2</text>
        <dbReference type="Rhea" id="RHEA:24304"/>
        <dbReference type="Rhea" id="RHEA-COMP:10494"/>
        <dbReference type="Rhea" id="RHEA-COMP:10495"/>
        <dbReference type="ChEBI" id="CHEBI:15378"/>
        <dbReference type="ChEBI" id="CHEBI:16526"/>
        <dbReference type="ChEBI" id="CHEBI:57305"/>
        <dbReference type="ChEBI" id="CHEBI:83099"/>
        <dbReference type="ChEBI" id="CHEBI:83143"/>
        <dbReference type="EC" id="1.4.4.2"/>
    </reaction>
</comment>
<comment type="subunit">
    <text evidence="1">The glycine cleavage system is composed of four proteins: P, T, L and H. In this organism, the P 'protein' is a heterodimer of two subunits.</text>
</comment>
<comment type="similarity">
    <text evidence="1">Belongs to the GcvP family. N-terminal subunit subfamily.</text>
</comment>
<name>GCSPA_NITV9</name>
<protein>
    <recommendedName>
        <fullName evidence="1">Probable glycine dehydrogenase (decarboxylating) subunit 1</fullName>
        <ecNumber evidence="1">1.4.4.2</ecNumber>
    </recommendedName>
    <alternativeName>
        <fullName evidence="1">Glycine cleavage system P-protein subunit 1</fullName>
    </alternativeName>
    <alternativeName>
        <fullName evidence="1">Glycine decarboxylase subunit 1</fullName>
    </alternativeName>
    <alternativeName>
        <fullName evidence="1">Glycine dehydrogenase (aminomethyl-transferring) subunit 1</fullName>
    </alternativeName>
</protein>
<dbReference type="EC" id="1.4.4.2" evidence="1"/>
<dbReference type="EMBL" id="CP001197">
    <property type="protein sequence ID" value="ACL07183.1"/>
    <property type="molecule type" value="Genomic_DNA"/>
</dbReference>
<dbReference type="SMR" id="B8DP96"/>
<dbReference type="STRING" id="883.DvMF_0224"/>
<dbReference type="KEGG" id="dvm:DvMF_0224"/>
<dbReference type="eggNOG" id="COG0403">
    <property type="taxonomic scope" value="Bacteria"/>
</dbReference>
<dbReference type="HOGENOM" id="CLU_004620_0_2_7"/>
<dbReference type="OrthoDB" id="9801272at2"/>
<dbReference type="GO" id="GO:0004375">
    <property type="term" value="F:glycine dehydrogenase (decarboxylating) activity"/>
    <property type="evidence" value="ECO:0007669"/>
    <property type="project" value="UniProtKB-EC"/>
</dbReference>
<dbReference type="GO" id="GO:0019464">
    <property type="term" value="P:glycine decarboxylation via glycine cleavage system"/>
    <property type="evidence" value="ECO:0007669"/>
    <property type="project" value="UniProtKB-UniRule"/>
</dbReference>
<dbReference type="GO" id="GO:0009116">
    <property type="term" value="P:nucleoside metabolic process"/>
    <property type="evidence" value="ECO:0007669"/>
    <property type="project" value="InterPro"/>
</dbReference>
<dbReference type="Gene3D" id="3.90.1150.10">
    <property type="entry name" value="Aspartate Aminotransferase, domain 1"/>
    <property type="match status" value="1"/>
</dbReference>
<dbReference type="Gene3D" id="3.40.640.10">
    <property type="entry name" value="Type I PLP-dependent aspartate aminotransferase-like (Major domain)"/>
    <property type="match status" value="1"/>
</dbReference>
<dbReference type="HAMAP" id="MF_00712">
    <property type="entry name" value="GcvPA"/>
    <property type="match status" value="1"/>
</dbReference>
<dbReference type="InterPro" id="IPR023010">
    <property type="entry name" value="GcvPA"/>
</dbReference>
<dbReference type="InterPro" id="IPR049315">
    <property type="entry name" value="GDC-P_N"/>
</dbReference>
<dbReference type="InterPro" id="IPR015424">
    <property type="entry name" value="PyrdxlP-dep_Trfase"/>
</dbReference>
<dbReference type="InterPro" id="IPR015421">
    <property type="entry name" value="PyrdxlP-dep_Trfase_major"/>
</dbReference>
<dbReference type="InterPro" id="IPR015422">
    <property type="entry name" value="PyrdxlP-dep_Trfase_small"/>
</dbReference>
<dbReference type="NCBIfam" id="NF001696">
    <property type="entry name" value="PRK00451.1"/>
    <property type="match status" value="1"/>
</dbReference>
<dbReference type="PANTHER" id="PTHR42806">
    <property type="entry name" value="GLYCINE CLEAVAGE SYSTEM P-PROTEIN"/>
    <property type="match status" value="1"/>
</dbReference>
<dbReference type="PANTHER" id="PTHR42806:SF1">
    <property type="entry name" value="GLYCINE DEHYDROGENASE (DECARBOXYLATING)"/>
    <property type="match status" value="1"/>
</dbReference>
<dbReference type="Pfam" id="PF02347">
    <property type="entry name" value="GDC-P"/>
    <property type="match status" value="1"/>
</dbReference>
<dbReference type="PIRSF" id="PIRSF006815">
    <property type="entry name" value="GcvPA"/>
    <property type="match status" value="1"/>
</dbReference>
<dbReference type="SUPFAM" id="SSF53383">
    <property type="entry name" value="PLP-dependent transferases"/>
    <property type="match status" value="1"/>
</dbReference>
<evidence type="ECO:0000255" key="1">
    <source>
        <dbReference type="HAMAP-Rule" id="MF_00712"/>
    </source>
</evidence>